<evidence type="ECO:0000255" key="1">
    <source>
        <dbReference type="HAMAP-Rule" id="MF_02084"/>
    </source>
</evidence>
<evidence type="ECO:0000256" key="2">
    <source>
        <dbReference type="SAM" id="MobiDB-lite"/>
    </source>
</evidence>
<evidence type="ECO:0000305" key="3"/>
<keyword id="KW-0028">Amino-acid biosynthesis</keyword>
<keyword id="KW-0032">Aminotransferase</keyword>
<keyword id="KW-0963">Cytoplasm</keyword>
<keyword id="KW-0457">Lysine biosynthesis</keyword>
<keyword id="KW-0663">Pyridoxal phosphate</keyword>
<keyword id="KW-1185">Reference proteome</keyword>
<keyword id="KW-0808">Transferase</keyword>
<accession>Q9RW75</accession>
<proteinExistence type="inferred from homology"/>
<name>LYSJ_DEIRA</name>
<organism>
    <name type="scientific">Deinococcus radiodurans (strain ATCC 13939 / DSM 20539 / JCM 16871 / CCUG 27074 / LMG 4051 / NBRC 15346 / NCIMB 9279 / VKM B-1422 / R1)</name>
    <dbReference type="NCBI Taxonomy" id="243230"/>
    <lineage>
        <taxon>Bacteria</taxon>
        <taxon>Thermotogati</taxon>
        <taxon>Deinococcota</taxon>
        <taxon>Deinococci</taxon>
        <taxon>Deinococcales</taxon>
        <taxon>Deinococcaceae</taxon>
        <taxon>Deinococcus</taxon>
    </lineage>
</organism>
<sequence>MTGNEQNPSKWLAAEKKYDSGVYNKHDVVMVRGQGATVWDENGRSYIDCVVGYGVATLGHSHPDVVKAVQEQAGKLMVMPQTVPNDKRAEFLQELVGVLPQGLDRVFLCNSGTEAMEAAKKFAITATGRSRFVSMKRGFSGRSLGALSFTWEPKYREPFGDAVDNKSVDFVTYGNLDELRAAVTEQTAAVIMEPVQGEGGVRPASAEFIQEARRITREKGALLILDEIQTGFCRTGKMFACEHFGVIPDGMTLAKAIAGGTPTAAFAMMSEVADRMPAGGHGTTFGGNPLSMAAGVASLRAMKREGLAEQAREKGAYMMDKLRAIQSPKIREVRGLGLMIGVELKEKSAPYIHAMEHDEGVLCLAATPLVVRFLPPAVISKEQIDQVVAAFERVLNNVNPREERQAELRAQQSEMGQQQVSQGESVQTE</sequence>
<feature type="chain" id="PRO_0000112742" description="[LysW]-aminoadipate semialdehyde transaminase">
    <location>
        <begin position="1"/>
        <end position="429"/>
    </location>
</feature>
<feature type="region of interest" description="Disordered" evidence="2">
    <location>
        <begin position="408"/>
        <end position="429"/>
    </location>
</feature>
<feature type="compositionally biased region" description="Low complexity" evidence="2">
    <location>
        <begin position="411"/>
        <end position="429"/>
    </location>
</feature>
<feature type="binding site" evidence="1">
    <location>
        <begin position="112"/>
        <end position="113"/>
    </location>
    <ligand>
        <name>pyridoxal 5'-phosphate</name>
        <dbReference type="ChEBI" id="CHEBI:597326"/>
    </ligand>
</feature>
<feature type="binding site" evidence="1">
    <location>
        <position position="139"/>
    </location>
    <ligand>
        <name>pyridoxal 5'-phosphate</name>
        <dbReference type="ChEBI" id="CHEBI:597326"/>
    </ligand>
</feature>
<feature type="binding site" evidence="1">
    <location>
        <position position="142"/>
    </location>
    <ligand>
        <name>substrate</name>
    </ligand>
</feature>
<feature type="binding site" evidence="1">
    <location>
        <begin position="226"/>
        <end position="229"/>
    </location>
    <ligand>
        <name>pyridoxal 5'-phosphate</name>
        <dbReference type="ChEBI" id="CHEBI:597326"/>
    </ligand>
</feature>
<feature type="binding site" evidence="1">
    <location>
        <position position="283"/>
    </location>
    <ligand>
        <name>substrate</name>
    </ligand>
</feature>
<feature type="binding site" evidence="1">
    <location>
        <position position="284"/>
    </location>
    <ligand>
        <name>pyridoxal 5'-phosphate</name>
        <dbReference type="ChEBI" id="CHEBI:597326"/>
    </ligand>
</feature>
<feature type="modified residue" description="N6-(pyridoxal phosphate)lysine" evidence="1">
    <location>
        <position position="255"/>
    </location>
</feature>
<dbReference type="EC" id="2.6.1.118" evidence="1"/>
<dbReference type="EMBL" id="AE000513">
    <property type="protein sequence ID" value="AAF10373.1"/>
    <property type="status" value="ALT_INIT"/>
    <property type="molecule type" value="Genomic_DNA"/>
</dbReference>
<dbReference type="PIR" id="E75474">
    <property type="entry name" value="E75474"/>
</dbReference>
<dbReference type="RefSeq" id="NP_294518.1">
    <property type="nucleotide sequence ID" value="NC_001263.1"/>
</dbReference>
<dbReference type="RefSeq" id="WP_034350363.1">
    <property type="nucleotide sequence ID" value="NC_001263.1"/>
</dbReference>
<dbReference type="SMR" id="Q9RW75"/>
<dbReference type="FunCoup" id="Q9RW75">
    <property type="interactions" value="288"/>
</dbReference>
<dbReference type="STRING" id="243230.DR_0794"/>
<dbReference type="PaxDb" id="243230-DR_0794"/>
<dbReference type="EnsemblBacteria" id="AAF10373">
    <property type="protein sequence ID" value="AAF10373"/>
    <property type="gene ID" value="DR_0794"/>
</dbReference>
<dbReference type="GeneID" id="69517039"/>
<dbReference type="KEGG" id="dra:DR_0794"/>
<dbReference type="PATRIC" id="fig|243230.17.peg.974"/>
<dbReference type="eggNOG" id="COG4992">
    <property type="taxonomic scope" value="Bacteria"/>
</dbReference>
<dbReference type="HOGENOM" id="CLU_016922_10_1_0"/>
<dbReference type="InParanoid" id="Q9RW75"/>
<dbReference type="OrthoDB" id="9807885at2"/>
<dbReference type="UniPathway" id="UPA00033">
    <property type="reaction ID" value="UER00038"/>
</dbReference>
<dbReference type="Proteomes" id="UP000002524">
    <property type="component" value="Chromosome 1"/>
</dbReference>
<dbReference type="GO" id="GO:0005737">
    <property type="term" value="C:cytoplasm"/>
    <property type="evidence" value="ECO:0007669"/>
    <property type="project" value="UniProtKB-SubCell"/>
</dbReference>
<dbReference type="GO" id="GO:0042802">
    <property type="term" value="F:identical protein binding"/>
    <property type="evidence" value="ECO:0000318"/>
    <property type="project" value="GO_Central"/>
</dbReference>
<dbReference type="GO" id="GO:0030170">
    <property type="term" value="F:pyridoxal phosphate binding"/>
    <property type="evidence" value="ECO:0000318"/>
    <property type="project" value="GO_Central"/>
</dbReference>
<dbReference type="GO" id="GO:0008483">
    <property type="term" value="F:transaminase activity"/>
    <property type="evidence" value="ECO:0007669"/>
    <property type="project" value="UniProtKB-UniRule"/>
</dbReference>
<dbReference type="GO" id="GO:0019878">
    <property type="term" value="P:lysine biosynthetic process via aminoadipic acid"/>
    <property type="evidence" value="ECO:0007669"/>
    <property type="project" value="UniProtKB-UniRule"/>
</dbReference>
<dbReference type="CDD" id="cd00610">
    <property type="entry name" value="OAT_like"/>
    <property type="match status" value="1"/>
</dbReference>
<dbReference type="FunFam" id="3.40.640.10:FF:000004">
    <property type="entry name" value="Acetylornithine aminotransferase"/>
    <property type="match status" value="1"/>
</dbReference>
<dbReference type="Gene3D" id="3.90.1150.10">
    <property type="entry name" value="Aspartate Aminotransferase, domain 1"/>
    <property type="match status" value="1"/>
</dbReference>
<dbReference type="Gene3D" id="3.40.640.10">
    <property type="entry name" value="Type I PLP-dependent aspartate aminotransferase-like (Major domain)"/>
    <property type="match status" value="1"/>
</dbReference>
<dbReference type="HAMAP" id="MF_02084">
    <property type="entry name" value="LysJ_aminotrans_3"/>
    <property type="match status" value="1"/>
</dbReference>
<dbReference type="InterPro" id="IPR005814">
    <property type="entry name" value="Aminotrans_3"/>
</dbReference>
<dbReference type="InterPro" id="IPR049704">
    <property type="entry name" value="Aminotrans_3_PPA_site"/>
</dbReference>
<dbReference type="InterPro" id="IPR050103">
    <property type="entry name" value="Class-III_PLP-dep_AT"/>
</dbReference>
<dbReference type="InterPro" id="IPR037537">
    <property type="entry name" value="LysJ"/>
</dbReference>
<dbReference type="InterPro" id="IPR015424">
    <property type="entry name" value="PyrdxlP-dep_Trfase"/>
</dbReference>
<dbReference type="InterPro" id="IPR015421">
    <property type="entry name" value="PyrdxlP-dep_Trfase_major"/>
</dbReference>
<dbReference type="InterPro" id="IPR015422">
    <property type="entry name" value="PyrdxlP-dep_Trfase_small"/>
</dbReference>
<dbReference type="PANTHER" id="PTHR11986:SF79">
    <property type="entry name" value="ACETYLORNITHINE AMINOTRANSFERASE, MITOCHONDRIAL"/>
    <property type="match status" value="1"/>
</dbReference>
<dbReference type="PANTHER" id="PTHR11986">
    <property type="entry name" value="AMINOTRANSFERASE CLASS III"/>
    <property type="match status" value="1"/>
</dbReference>
<dbReference type="Pfam" id="PF00202">
    <property type="entry name" value="Aminotran_3"/>
    <property type="match status" value="1"/>
</dbReference>
<dbReference type="PIRSF" id="PIRSF000521">
    <property type="entry name" value="Transaminase_4ab_Lys_Orn"/>
    <property type="match status" value="1"/>
</dbReference>
<dbReference type="SUPFAM" id="SSF53383">
    <property type="entry name" value="PLP-dependent transferases"/>
    <property type="match status" value="1"/>
</dbReference>
<dbReference type="PROSITE" id="PS00600">
    <property type="entry name" value="AA_TRANSFER_CLASS_3"/>
    <property type="match status" value="1"/>
</dbReference>
<gene>
    <name evidence="1" type="primary">lysJ</name>
    <name type="ordered locus">DR_0794</name>
</gene>
<protein>
    <recommendedName>
        <fullName evidence="1">[LysW]-aminoadipate semialdehyde transaminase</fullName>
        <ecNumber evidence="1">2.6.1.118</ecNumber>
    </recommendedName>
</protein>
<reference key="1">
    <citation type="journal article" date="1999" name="Science">
        <title>Genome sequence of the radioresistant bacterium Deinococcus radiodurans R1.</title>
        <authorList>
            <person name="White O."/>
            <person name="Eisen J.A."/>
            <person name="Heidelberg J.F."/>
            <person name="Hickey E.K."/>
            <person name="Peterson J.D."/>
            <person name="Dodson R.J."/>
            <person name="Haft D.H."/>
            <person name="Gwinn M.L."/>
            <person name="Nelson W.C."/>
            <person name="Richardson D.L."/>
            <person name="Moffat K.S."/>
            <person name="Qin H."/>
            <person name="Jiang L."/>
            <person name="Pamphile W."/>
            <person name="Crosby M."/>
            <person name="Shen M."/>
            <person name="Vamathevan J.J."/>
            <person name="Lam P."/>
            <person name="McDonald L.A."/>
            <person name="Utterback T.R."/>
            <person name="Zalewski C."/>
            <person name="Makarova K.S."/>
            <person name="Aravind L."/>
            <person name="Daly M.J."/>
            <person name="Minton K.W."/>
            <person name="Fleischmann R.D."/>
            <person name="Ketchum K.A."/>
            <person name="Nelson K.E."/>
            <person name="Salzberg S.L."/>
            <person name="Smith H.O."/>
            <person name="Venter J.C."/>
            <person name="Fraser C.M."/>
        </authorList>
    </citation>
    <scope>NUCLEOTIDE SEQUENCE [LARGE SCALE GENOMIC DNA]</scope>
    <source>
        <strain>ATCC 13939 / DSM 20539 / JCM 16871 / CCUG 27074 / LMG 4051 / NBRC 15346 / NCIMB 9279 / VKM B-1422 / R1</strain>
    </source>
</reference>
<comment type="function">
    <text evidence="1">Catalyzes the transfer of the amino group of L-glutamate to [LysW]-aminoadipate 6-semialdehyde, generating [LysW]-gamma-L-lysine.</text>
</comment>
<comment type="catalytic activity">
    <reaction evidence="1">
        <text>[amino-group carrier protein]-C-terminal-gamma-(L-lysyl)-L-glutamate + 2-oxoglutarate = [amino-group carrier protein]-C-terminal-N-(1-carboxy-5-oxopentan-1-yl)-L-glutamine + L-glutamate</text>
        <dbReference type="Rhea" id="RHEA:41952"/>
        <dbReference type="Rhea" id="RHEA-COMP:9714"/>
        <dbReference type="Rhea" id="RHEA-COMP:9715"/>
        <dbReference type="ChEBI" id="CHEBI:16810"/>
        <dbReference type="ChEBI" id="CHEBI:29985"/>
        <dbReference type="ChEBI" id="CHEBI:78501"/>
        <dbReference type="ChEBI" id="CHEBI:78526"/>
        <dbReference type="EC" id="2.6.1.118"/>
    </reaction>
</comment>
<comment type="cofactor">
    <cofactor evidence="1">
        <name>pyridoxal 5'-phosphate</name>
        <dbReference type="ChEBI" id="CHEBI:597326"/>
    </cofactor>
    <text evidence="1">Binds 1 pyridoxal phosphate per subunit.</text>
</comment>
<comment type="pathway">
    <text evidence="1">Amino-acid biosynthesis; L-lysine biosynthesis via AAA pathway; L-lysine from L-alpha-aminoadipate (Thermus route): step 4/5.</text>
</comment>
<comment type="subunit">
    <text evidence="1">Homodimer.</text>
</comment>
<comment type="subcellular location">
    <subcellularLocation>
        <location evidence="1">Cytoplasm</location>
    </subcellularLocation>
</comment>
<comment type="similarity">
    <text evidence="1">Belongs to the class-III pyridoxal-phosphate-dependent aminotransferase family. LysJ subfamily.</text>
</comment>
<comment type="sequence caution" evidence="3">
    <conflict type="erroneous initiation">
        <sequence resource="EMBL-CDS" id="AAF10373"/>
    </conflict>
</comment>